<evidence type="ECO:0000255" key="1">
    <source>
        <dbReference type="HAMAP-Rule" id="MF_00539"/>
    </source>
</evidence>
<evidence type="ECO:0000256" key="2">
    <source>
        <dbReference type="SAM" id="MobiDB-lite"/>
    </source>
</evidence>
<evidence type="ECO:0000305" key="3"/>
<dbReference type="EMBL" id="AM286415">
    <property type="protein sequence ID" value="CAL10545.1"/>
    <property type="molecule type" value="Genomic_DNA"/>
</dbReference>
<dbReference type="RefSeq" id="WP_004699897.1">
    <property type="nucleotide sequence ID" value="NC_008800.1"/>
</dbReference>
<dbReference type="RefSeq" id="YP_001004789.1">
    <property type="nucleotide sequence ID" value="NC_008800.1"/>
</dbReference>
<dbReference type="SMR" id="A1JIV4"/>
<dbReference type="GeneID" id="93968898"/>
<dbReference type="KEGG" id="yen:YE0419"/>
<dbReference type="PATRIC" id="fig|393305.7.peg.515"/>
<dbReference type="eggNOG" id="COG0211">
    <property type="taxonomic scope" value="Bacteria"/>
</dbReference>
<dbReference type="HOGENOM" id="CLU_095424_4_1_6"/>
<dbReference type="OrthoDB" id="9803474at2"/>
<dbReference type="Proteomes" id="UP000000642">
    <property type="component" value="Chromosome"/>
</dbReference>
<dbReference type="GO" id="GO:0022625">
    <property type="term" value="C:cytosolic large ribosomal subunit"/>
    <property type="evidence" value="ECO:0007669"/>
    <property type="project" value="TreeGrafter"/>
</dbReference>
<dbReference type="GO" id="GO:0003735">
    <property type="term" value="F:structural constituent of ribosome"/>
    <property type="evidence" value="ECO:0007669"/>
    <property type="project" value="InterPro"/>
</dbReference>
<dbReference type="GO" id="GO:0006412">
    <property type="term" value="P:translation"/>
    <property type="evidence" value="ECO:0007669"/>
    <property type="project" value="UniProtKB-UniRule"/>
</dbReference>
<dbReference type="FunFam" id="2.40.50.100:FF:000001">
    <property type="entry name" value="50S ribosomal protein L27"/>
    <property type="match status" value="1"/>
</dbReference>
<dbReference type="Gene3D" id="2.40.50.100">
    <property type="match status" value="1"/>
</dbReference>
<dbReference type="HAMAP" id="MF_00539">
    <property type="entry name" value="Ribosomal_bL27"/>
    <property type="match status" value="1"/>
</dbReference>
<dbReference type="InterPro" id="IPR001684">
    <property type="entry name" value="Ribosomal_bL27"/>
</dbReference>
<dbReference type="InterPro" id="IPR018261">
    <property type="entry name" value="Ribosomal_bL27_CS"/>
</dbReference>
<dbReference type="NCBIfam" id="TIGR00062">
    <property type="entry name" value="L27"/>
    <property type="match status" value="1"/>
</dbReference>
<dbReference type="PANTHER" id="PTHR15893:SF0">
    <property type="entry name" value="LARGE RIBOSOMAL SUBUNIT PROTEIN BL27M"/>
    <property type="match status" value="1"/>
</dbReference>
<dbReference type="PANTHER" id="PTHR15893">
    <property type="entry name" value="RIBOSOMAL PROTEIN L27"/>
    <property type="match status" value="1"/>
</dbReference>
<dbReference type="Pfam" id="PF01016">
    <property type="entry name" value="Ribosomal_L27"/>
    <property type="match status" value="1"/>
</dbReference>
<dbReference type="PRINTS" id="PR00063">
    <property type="entry name" value="RIBOSOMALL27"/>
</dbReference>
<dbReference type="SUPFAM" id="SSF110324">
    <property type="entry name" value="Ribosomal L27 protein-like"/>
    <property type="match status" value="1"/>
</dbReference>
<dbReference type="PROSITE" id="PS00831">
    <property type="entry name" value="RIBOSOMAL_L27"/>
    <property type="match status" value="1"/>
</dbReference>
<organism>
    <name type="scientific">Yersinia enterocolitica serotype O:8 / biotype 1B (strain NCTC 13174 / 8081)</name>
    <dbReference type="NCBI Taxonomy" id="393305"/>
    <lineage>
        <taxon>Bacteria</taxon>
        <taxon>Pseudomonadati</taxon>
        <taxon>Pseudomonadota</taxon>
        <taxon>Gammaproteobacteria</taxon>
        <taxon>Enterobacterales</taxon>
        <taxon>Yersiniaceae</taxon>
        <taxon>Yersinia</taxon>
    </lineage>
</organism>
<protein>
    <recommendedName>
        <fullName evidence="1">Large ribosomal subunit protein bL27</fullName>
    </recommendedName>
    <alternativeName>
        <fullName evidence="3">50S ribosomal protein L27</fullName>
    </alternativeName>
</protein>
<accession>A1JIV4</accession>
<comment type="similarity">
    <text evidence="1">Belongs to the bacterial ribosomal protein bL27 family.</text>
</comment>
<reference key="1">
    <citation type="journal article" date="2006" name="PLoS Genet.">
        <title>The complete genome sequence and comparative genome analysis of the high pathogenicity Yersinia enterocolitica strain 8081.</title>
        <authorList>
            <person name="Thomson N.R."/>
            <person name="Howard S."/>
            <person name="Wren B.W."/>
            <person name="Holden M.T.G."/>
            <person name="Crossman L."/>
            <person name="Challis G.L."/>
            <person name="Churcher C."/>
            <person name="Mungall K."/>
            <person name="Brooks K."/>
            <person name="Chillingworth T."/>
            <person name="Feltwell T."/>
            <person name="Abdellah Z."/>
            <person name="Hauser H."/>
            <person name="Jagels K."/>
            <person name="Maddison M."/>
            <person name="Moule S."/>
            <person name="Sanders M."/>
            <person name="Whitehead S."/>
            <person name="Quail M.A."/>
            <person name="Dougan G."/>
            <person name="Parkhill J."/>
            <person name="Prentice M.B."/>
        </authorList>
    </citation>
    <scope>NUCLEOTIDE SEQUENCE [LARGE SCALE GENOMIC DNA]</scope>
    <source>
        <strain>NCTC 13174 / 8081</strain>
    </source>
</reference>
<feature type="chain" id="PRO_1000017649" description="Large ribosomal subunit protein bL27">
    <location>
        <begin position="1"/>
        <end position="85"/>
    </location>
</feature>
<feature type="region of interest" description="Disordered" evidence="2">
    <location>
        <begin position="1"/>
        <end position="20"/>
    </location>
</feature>
<name>RL27_YERE8</name>
<proteinExistence type="inferred from homology"/>
<gene>
    <name evidence="1" type="primary">rpmA</name>
    <name type="ordered locus">YE0419</name>
</gene>
<sequence length="85" mass="9182">MAHKKAGGSTRNGRDSESKRLGVKRFGGEAVLAGSIIVRQRGTKFHAGIDVGCGKDHTLFALKDGKVKFEVKGPKNRKFISIEAE</sequence>
<keyword id="KW-0687">Ribonucleoprotein</keyword>
<keyword id="KW-0689">Ribosomal protein</keyword>